<keyword id="KW-0001">2Fe-2S</keyword>
<keyword id="KW-0274">FAD</keyword>
<keyword id="KW-0285">Flavoprotein</keyword>
<keyword id="KW-0408">Iron</keyword>
<keyword id="KW-0411">Iron-sulfur</keyword>
<keyword id="KW-0479">Metal-binding</keyword>
<keyword id="KW-0560">Oxidoreductase</keyword>
<sequence>MAPRPLRRHPPLHHSFHESRRDPVADKHRINFEPVDIEMEVGEDEYILDAAFRQGIHLMHGCREGRCSACKSFVLEGDIQMEDYSTFACNDAEVDEGHVLLCRSTAYSDCTIELLNFDEDELLGGVPIQDVRTRVTRIEPMTKDIVSLRLAPVEPAGYEFKPGQYSDLHIPGTEEHRSFSMATTRSTPGHVEFLIKKYPGGKFAGLLEDGISVGDEIALTGPYGSFTIKEGHVLPMVFIGGGAGMAPLLSLLRHMSETGNTRQVHFYYGARTPQDLFYVDEILELGRGLTDFTFVACLSESMDPPPVGAIAVEDGNVTDVVGRREPDIGRAEVYLCGPPPMVDAALELLEANGTPKDQIFYDKFTSPAFE</sequence>
<reference key="1">
    <citation type="journal article" date="2006" name="Proc. Natl. Acad. Sci. U.S.A.">
        <title>The complete genome of Rhodococcus sp. RHA1 provides insights into a catabolic powerhouse.</title>
        <authorList>
            <person name="McLeod M.P."/>
            <person name="Warren R.L."/>
            <person name="Hsiao W.W.L."/>
            <person name="Araki N."/>
            <person name="Myhre M."/>
            <person name="Fernandes C."/>
            <person name="Miyazawa D."/>
            <person name="Wong W."/>
            <person name="Lillquist A.L."/>
            <person name="Wang D."/>
            <person name="Dosanjh M."/>
            <person name="Hara H."/>
            <person name="Petrescu A."/>
            <person name="Morin R.D."/>
            <person name="Yang G."/>
            <person name="Stott J.M."/>
            <person name="Schein J.E."/>
            <person name="Shin H."/>
            <person name="Smailus D."/>
            <person name="Siddiqui A.S."/>
            <person name="Marra M.A."/>
            <person name="Jones S.J.M."/>
            <person name="Holt R."/>
            <person name="Brinkman F.S.L."/>
            <person name="Miyauchi K."/>
            <person name="Fukuda M."/>
            <person name="Davies J.E."/>
            <person name="Mohn W.W."/>
            <person name="Eltis L.D."/>
        </authorList>
    </citation>
    <scope>NUCLEOTIDE SEQUENCE [LARGE SCALE GENOMIC DNA]</scope>
    <source>
        <strain evidence="10">RHA1</strain>
    </source>
</reference>
<reference key="2">
    <citation type="journal article" date="2007" name="Appl. Environ. Microbiol.">
        <title>An inducible propane monooxygenase is responsible for N-nitrosodimethylamine degradation by Rhodococcus sp. strain RHA1.</title>
        <authorList>
            <person name="Sharp J.O."/>
            <person name="Sales C.M."/>
            <person name="LeBlanc J.C."/>
            <person name="Liu J."/>
            <person name="Wood T.K."/>
            <person name="Eltis L.D."/>
            <person name="Mohn W.W."/>
            <person name="Alvarez-Cohen L."/>
        </authorList>
    </citation>
    <scope>FUNCTION</scope>
    <scope>INDUCTION BY PROPANE</scope>
    <scope>SUBUNIT</scope>
    <source>
        <strain>RHA1</strain>
    </source>
</reference>
<gene>
    <name evidence="6" type="primary">prmB</name>
    <name evidence="9" type="ordered locus">RHA1_ro00442</name>
</gene>
<evidence type="ECO:0000250" key="1">
    <source>
        <dbReference type="UniProtKB" id="Q03304"/>
    </source>
</evidence>
<evidence type="ECO:0000255" key="2">
    <source>
        <dbReference type="PROSITE-ProRule" id="PRU00465"/>
    </source>
</evidence>
<evidence type="ECO:0000255" key="3">
    <source>
        <dbReference type="PROSITE-ProRule" id="PRU00716"/>
    </source>
</evidence>
<evidence type="ECO:0000256" key="4">
    <source>
        <dbReference type="SAM" id="MobiDB-lite"/>
    </source>
</evidence>
<evidence type="ECO:0000269" key="5">
    <source>
    </source>
</evidence>
<evidence type="ECO:0000303" key="6">
    <source>
    </source>
</evidence>
<evidence type="ECO:0000305" key="7"/>
<evidence type="ECO:0000305" key="8">
    <source>
    </source>
</evidence>
<evidence type="ECO:0000312" key="9">
    <source>
        <dbReference type="EMBL" id="ABG92278.1"/>
    </source>
</evidence>
<evidence type="ECO:0000312" key="10">
    <source>
        <dbReference type="Proteomes" id="UP000008710"/>
    </source>
</evidence>
<name>PRMB_RHOJR</name>
<accession>Q0SJK8</accession>
<dbReference type="EC" id="1.18.1.-" evidence="7"/>
<dbReference type="EMBL" id="CP000431">
    <property type="protein sequence ID" value="ABG92278.1"/>
    <property type="molecule type" value="Genomic_DNA"/>
</dbReference>
<dbReference type="SMR" id="Q0SJK8"/>
<dbReference type="KEGG" id="rha:RHA1_ro00442"/>
<dbReference type="eggNOG" id="COG1018">
    <property type="taxonomic scope" value="Bacteria"/>
</dbReference>
<dbReference type="HOGENOM" id="CLU_003827_7_0_11"/>
<dbReference type="Proteomes" id="UP000008710">
    <property type="component" value="Chromosome"/>
</dbReference>
<dbReference type="GO" id="GO:0051537">
    <property type="term" value="F:2 iron, 2 sulfur cluster binding"/>
    <property type="evidence" value="ECO:0007669"/>
    <property type="project" value="UniProtKB-KW"/>
</dbReference>
<dbReference type="GO" id="GO:0046872">
    <property type="term" value="F:metal ion binding"/>
    <property type="evidence" value="ECO:0007669"/>
    <property type="project" value="UniProtKB-KW"/>
</dbReference>
<dbReference type="GO" id="GO:0016491">
    <property type="term" value="F:oxidoreductase activity"/>
    <property type="evidence" value="ECO:0007669"/>
    <property type="project" value="UniProtKB-KW"/>
</dbReference>
<dbReference type="CDD" id="cd00207">
    <property type="entry name" value="fer2"/>
    <property type="match status" value="1"/>
</dbReference>
<dbReference type="Gene3D" id="3.10.20.30">
    <property type="match status" value="1"/>
</dbReference>
<dbReference type="Gene3D" id="3.40.50.80">
    <property type="entry name" value="Nucleotide-binding domain of ferredoxin-NADP reductase (FNR) module"/>
    <property type="match status" value="1"/>
</dbReference>
<dbReference type="Gene3D" id="2.40.30.10">
    <property type="entry name" value="Translation factors"/>
    <property type="match status" value="1"/>
</dbReference>
<dbReference type="InterPro" id="IPR036010">
    <property type="entry name" value="2Fe-2S_ferredoxin-like_sf"/>
</dbReference>
<dbReference type="InterPro" id="IPR001041">
    <property type="entry name" value="2Fe-2S_ferredoxin-type"/>
</dbReference>
<dbReference type="InterPro" id="IPR006058">
    <property type="entry name" value="2Fe2S_fd_BS"/>
</dbReference>
<dbReference type="InterPro" id="IPR012675">
    <property type="entry name" value="Beta-grasp_dom_sf"/>
</dbReference>
<dbReference type="InterPro" id="IPR008333">
    <property type="entry name" value="Cbr1-like_FAD-bd_dom"/>
</dbReference>
<dbReference type="InterPro" id="IPR017927">
    <property type="entry name" value="FAD-bd_FR_type"/>
</dbReference>
<dbReference type="InterPro" id="IPR039261">
    <property type="entry name" value="FNR_nucleotide-bd"/>
</dbReference>
<dbReference type="InterPro" id="IPR050415">
    <property type="entry name" value="MRET"/>
</dbReference>
<dbReference type="InterPro" id="IPR001433">
    <property type="entry name" value="OxRdtase_FAD/NAD-bd"/>
</dbReference>
<dbReference type="InterPro" id="IPR017938">
    <property type="entry name" value="Riboflavin_synthase-like_b-brl"/>
</dbReference>
<dbReference type="PANTHER" id="PTHR47354">
    <property type="entry name" value="NADH OXIDOREDUCTASE HCR"/>
    <property type="match status" value="1"/>
</dbReference>
<dbReference type="PANTHER" id="PTHR47354:SF5">
    <property type="entry name" value="PROTEIN RFBI"/>
    <property type="match status" value="1"/>
</dbReference>
<dbReference type="Pfam" id="PF00970">
    <property type="entry name" value="FAD_binding_6"/>
    <property type="match status" value="1"/>
</dbReference>
<dbReference type="Pfam" id="PF00111">
    <property type="entry name" value="Fer2"/>
    <property type="match status" value="1"/>
</dbReference>
<dbReference type="Pfam" id="PF00175">
    <property type="entry name" value="NAD_binding_1"/>
    <property type="match status" value="1"/>
</dbReference>
<dbReference type="PRINTS" id="PR00410">
    <property type="entry name" value="PHEHYDRXLASE"/>
</dbReference>
<dbReference type="SUPFAM" id="SSF54292">
    <property type="entry name" value="2Fe-2S ferredoxin-like"/>
    <property type="match status" value="1"/>
</dbReference>
<dbReference type="SUPFAM" id="SSF52343">
    <property type="entry name" value="Ferredoxin reductase-like, C-terminal NADP-linked domain"/>
    <property type="match status" value="1"/>
</dbReference>
<dbReference type="SUPFAM" id="SSF63380">
    <property type="entry name" value="Riboflavin synthase domain-like"/>
    <property type="match status" value="1"/>
</dbReference>
<dbReference type="PROSITE" id="PS00197">
    <property type="entry name" value="2FE2S_FER_1"/>
    <property type="match status" value="1"/>
</dbReference>
<dbReference type="PROSITE" id="PS51085">
    <property type="entry name" value="2FE2S_FER_2"/>
    <property type="match status" value="1"/>
</dbReference>
<dbReference type="PROSITE" id="PS51384">
    <property type="entry name" value="FAD_FR"/>
    <property type="match status" value="1"/>
</dbReference>
<protein>
    <recommendedName>
        <fullName evidence="6">Propane 2-monooxygenase, reductase component</fullName>
        <shortName evidence="6">PrMO</shortName>
        <ecNumber evidence="7">1.18.1.-</ecNumber>
    </recommendedName>
</protein>
<feature type="chain" id="PRO_0000442969" description="Propane 2-monooxygenase, reductase component">
    <location>
        <begin position="1"/>
        <end position="370"/>
    </location>
</feature>
<feature type="domain" description="2Fe-2S ferredoxin-type" evidence="2">
    <location>
        <begin position="28"/>
        <end position="118"/>
    </location>
</feature>
<feature type="domain" description="FAD-binding FR-type" evidence="3">
    <location>
        <begin position="128"/>
        <end position="229"/>
    </location>
</feature>
<feature type="region of interest" description="Disordered" evidence="4">
    <location>
        <begin position="1"/>
        <end position="21"/>
    </location>
</feature>
<feature type="compositionally biased region" description="Basic residues" evidence="4">
    <location>
        <begin position="1"/>
        <end position="14"/>
    </location>
</feature>
<feature type="binding site" evidence="2">
    <location>
        <position position="62"/>
    </location>
    <ligand>
        <name>[2Fe-2S] cluster</name>
        <dbReference type="ChEBI" id="CHEBI:190135"/>
    </ligand>
</feature>
<feature type="binding site" evidence="2">
    <location>
        <position position="67"/>
    </location>
    <ligand>
        <name>[2Fe-2S] cluster</name>
        <dbReference type="ChEBI" id="CHEBI:190135"/>
    </ligand>
</feature>
<feature type="binding site" evidence="2">
    <location>
        <position position="70"/>
    </location>
    <ligand>
        <name>[2Fe-2S] cluster</name>
        <dbReference type="ChEBI" id="CHEBI:190135"/>
    </ligand>
</feature>
<feature type="binding site" evidence="2">
    <location>
        <position position="102"/>
    </location>
    <ligand>
        <name>[2Fe-2S] cluster</name>
        <dbReference type="ChEBI" id="CHEBI:190135"/>
    </ligand>
</feature>
<proteinExistence type="evidence at protein level"/>
<organism>
    <name type="scientific">Rhodococcus jostii (strain RHA1)</name>
    <dbReference type="NCBI Taxonomy" id="101510"/>
    <lineage>
        <taxon>Bacteria</taxon>
        <taxon>Bacillati</taxon>
        <taxon>Actinomycetota</taxon>
        <taxon>Actinomycetes</taxon>
        <taxon>Mycobacteriales</taxon>
        <taxon>Nocardiaceae</taxon>
        <taxon>Rhodococcus</taxon>
    </lineage>
</organism>
<comment type="function">
    <text evidence="5">Reductase component of the propane 2-monooxygenase multicomponent enzyme system which is involved in the degradation of propane via the O2-dependent hydroxylation of propane. Reductase catalyzes the transfer of electrons from NADH or NADPH to monooxygenase (Probable).</text>
</comment>
<comment type="cofactor">
    <cofactor evidence="1">
        <name>FAD</name>
        <dbReference type="ChEBI" id="CHEBI:57692"/>
    </cofactor>
</comment>
<comment type="cofactor">
    <cofactor evidence="2">
        <name>[2Fe-2S] cluster</name>
        <dbReference type="ChEBI" id="CHEBI:190135"/>
    </cofactor>
    <text evidence="2">Binds 1 2Fe-2S cluster.</text>
</comment>
<comment type="subunit">
    <text evidence="8">The propane 2-monooxygenase multicomponent enzyme system is composed of an electron transfer component and a monooxygenase component interacting with the effector protein PrmD. The electron transfer component is composed of a reductase (PrmB), and the monooxygenase component is formed by a large subunit (PrmA) and a small subunit (PrmC).</text>
</comment>
<comment type="induction">
    <text evidence="5">By propane.</text>
</comment>
<comment type="similarity">
    <text evidence="7">Belongs to the TmoA/XamoA family.</text>
</comment>